<organism>
    <name type="scientific">Prochlorococcus marinus (strain MIT 9301)</name>
    <dbReference type="NCBI Taxonomy" id="167546"/>
    <lineage>
        <taxon>Bacteria</taxon>
        <taxon>Bacillati</taxon>
        <taxon>Cyanobacteriota</taxon>
        <taxon>Cyanophyceae</taxon>
        <taxon>Synechococcales</taxon>
        <taxon>Prochlorococcaceae</taxon>
        <taxon>Prochlorococcus</taxon>
    </lineage>
</organism>
<proteinExistence type="inferred from homology"/>
<sequence>MIEPLLCGIVLGLVPITLLGLFVSAWNQYRRGSGMLDID</sequence>
<evidence type="ECO:0000255" key="1">
    <source>
        <dbReference type="HAMAP-Rule" id="MF_00432"/>
    </source>
</evidence>
<reference key="1">
    <citation type="journal article" date="2007" name="PLoS Genet.">
        <title>Patterns and implications of gene gain and loss in the evolution of Prochlorococcus.</title>
        <authorList>
            <person name="Kettler G.C."/>
            <person name="Martiny A.C."/>
            <person name="Huang K."/>
            <person name="Zucker J."/>
            <person name="Coleman M.L."/>
            <person name="Rodrigue S."/>
            <person name="Chen F."/>
            <person name="Lapidus A."/>
            <person name="Ferriera S."/>
            <person name="Johnson J."/>
            <person name="Steglich C."/>
            <person name="Church G.M."/>
            <person name="Richardson P."/>
            <person name="Chisholm S.W."/>
        </authorList>
    </citation>
    <scope>NUCLEOTIDE SEQUENCE [LARGE SCALE GENOMIC DNA]</scope>
    <source>
        <strain>MIT 9301</strain>
    </source>
</reference>
<keyword id="KW-0249">Electron transport</keyword>
<keyword id="KW-0472">Membrane</keyword>
<keyword id="KW-0602">Photosynthesis</keyword>
<keyword id="KW-1185">Reference proteome</keyword>
<keyword id="KW-0793">Thylakoid</keyword>
<keyword id="KW-0812">Transmembrane</keyword>
<keyword id="KW-1133">Transmembrane helix</keyword>
<keyword id="KW-0813">Transport</keyword>
<comment type="function">
    <text evidence="1">Component of the cytochrome b6-f complex, which mediates electron transfer between photosystem II (PSII) and photosystem I (PSI), cyclic electron flow around PSI, and state transitions. PetG is required for either the stability or assembly of the cytochrome b6-f complex.</text>
</comment>
<comment type="subunit">
    <text evidence="1">The 4 large subunits of the cytochrome b6-f complex are cytochrome b6, subunit IV (17 kDa polypeptide, PetD), cytochrome f and the Rieske protein, while the 4 small subunits are PetG, PetL, PetM and PetN. The complex functions as a dimer.</text>
</comment>
<comment type="subcellular location">
    <subcellularLocation>
        <location evidence="1">Cellular thylakoid membrane</location>
        <topology evidence="1">Single-pass membrane protein</topology>
    </subcellularLocation>
</comment>
<comment type="similarity">
    <text evidence="1">Belongs to the PetG family.</text>
</comment>
<dbReference type="EMBL" id="CP000576">
    <property type="protein sequence ID" value="ABO17787.1"/>
    <property type="molecule type" value="Genomic_DNA"/>
</dbReference>
<dbReference type="RefSeq" id="WP_011376619.1">
    <property type="nucleotide sequence ID" value="NC_009091.1"/>
</dbReference>
<dbReference type="SMR" id="A3PDG2"/>
<dbReference type="STRING" id="167546.P9301_11641"/>
<dbReference type="KEGG" id="pmg:P9301_11641"/>
<dbReference type="HOGENOM" id="CLU_216962_0_0_3"/>
<dbReference type="OrthoDB" id="428448at2"/>
<dbReference type="Proteomes" id="UP000001430">
    <property type="component" value="Chromosome"/>
</dbReference>
<dbReference type="GO" id="GO:0009512">
    <property type="term" value="C:cytochrome b6f complex"/>
    <property type="evidence" value="ECO:0007669"/>
    <property type="project" value="InterPro"/>
</dbReference>
<dbReference type="GO" id="GO:0031676">
    <property type="term" value="C:plasma membrane-derived thylakoid membrane"/>
    <property type="evidence" value="ECO:0007669"/>
    <property type="project" value="UniProtKB-SubCell"/>
</dbReference>
<dbReference type="GO" id="GO:0045158">
    <property type="term" value="F:electron transporter, transferring electrons within cytochrome b6/f complex of photosystem II activity"/>
    <property type="evidence" value="ECO:0007669"/>
    <property type="project" value="UniProtKB-UniRule"/>
</dbReference>
<dbReference type="GO" id="GO:0017004">
    <property type="term" value="P:cytochrome complex assembly"/>
    <property type="evidence" value="ECO:0007669"/>
    <property type="project" value="UniProtKB-UniRule"/>
</dbReference>
<dbReference type="GO" id="GO:0015979">
    <property type="term" value="P:photosynthesis"/>
    <property type="evidence" value="ECO:0007669"/>
    <property type="project" value="UniProtKB-KW"/>
</dbReference>
<dbReference type="HAMAP" id="MF_00432">
    <property type="entry name" value="Cytb6_f_PetG"/>
    <property type="match status" value="1"/>
</dbReference>
<dbReference type="InterPro" id="IPR003683">
    <property type="entry name" value="Cyt_6/f_cplx_su5"/>
</dbReference>
<dbReference type="InterPro" id="IPR036099">
    <property type="entry name" value="Cyt_6/f_cplx_su5_sf"/>
</dbReference>
<dbReference type="NCBIfam" id="NF001907">
    <property type="entry name" value="PRK00665.1"/>
    <property type="match status" value="1"/>
</dbReference>
<dbReference type="Pfam" id="PF02529">
    <property type="entry name" value="PetG"/>
    <property type="match status" value="1"/>
</dbReference>
<dbReference type="PIRSF" id="PIRSF000034">
    <property type="entry name" value="Cyt_b6-f_V"/>
    <property type="match status" value="1"/>
</dbReference>
<dbReference type="SUPFAM" id="SSF103446">
    <property type="entry name" value="PetG subunit of the cytochrome b6f complex"/>
    <property type="match status" value="1"/>
</dbReference>
<feature type="chain" id="PRO_1000050391" description="Cytochrome b6-f complex subunit 5">
    <location>
        <begin position="1"/>
        <end position="39"/>
    </location>
</feature>
<feature type="transmembrane region" description="Helical" evidence="1">
    <location>
        <begin position="5"/>
        <end position="25"/>
    </location>
</feature>
<protein>
    <recommendedName>
        <fullName evidence="1">Cytochrome b6-f complex subunit 5</fullName>
    </recommendedName>
    <alternativeName>
        <fullName evidence="1">Cytochrome b6-f complex subunit PetG</fullName>
    </alternativeName>
    <alternativeName>
        <fullName evidence="1">Cytochrome b6-f complex subunit V</fullName>
    </alternativeName>
</protein>
<accession>A3PDG2</accession>
<gene>
    <name evidence="1" type="primary">petG</name>
    <name type="ordered locus">P9301_11641</name>
</gene>
<name>PETG_PROM0</name>